<organism>
    <name type="scientific">Xenopus tropicalis</name>
    <name type="common">Western clawed frog</name>
    <name type="synonym">Silurana tropicalis</name>
    <dbReference type="NCBI Taxonomy" id="8364"/>
    <lineage>
        <taxon>Eukaryota</taxon>
        <taxon>Metazoa</taxon>
        <taxon>Chordata</taxon>
        <taxon>Craniata</taxon>
        <taxon>Vertebrata</taxon>
        <taxon>Euteleostomi</taxon>
        <taxon>Amphibia</taxon>
        <taxon>Batrachia</taxon>
        <taxon>Anura</taxon>
        <taxon>Pipoidea</taxon>
        <taxon>Pipidae</taxon>
        <taxon>Xenopodinae</taxon>
        <taxon>Xenopus</taxon>
        <taxon>Silurana</taxon>
    </lineage>
</organism>
<sequence length="256" mass="29241">MAENDSWDADDFEPEVSNQKGAVSGPPPAGRDRWEGEDEEEDVKDNWDDEEEAEAATKQEAQKTVEPKVSEKKKLLEKIREKEKLHKKRQEEVNQQEKEGTAPELSPEEQLAEKLRLKKLQEDSDLELAKEAFGDNVTVTGIDAMNPSSREDFTEFGKLLKEKITQYERSLFYPGFLEVLVREVCVSLEVDDLKKINNSLTVLCFEKQKQEKQQSKAKKKKKGVVPGGGLKANMKNDLEDYGGMDEGYGREYDDFM</sequence>
<name>EIF3J_XENTR</name>
<comment type="function">
    <text evidence="1">Component of the eukaryotic translation initiation factor 3 (eIF-3) complex, which is involved in protein synthesis of a specialized repertoire of mRNAs and, together with other initiation factors, stimulates binding of mRNA and methionyl-tRNAi to the 40S ribosome. The eIF-3 complex specifically targets and initiates translation of a subset of mRNAs involved in cell proliferation.</text>
</comment>
<comment type="subunit">
    <text evidence="1">Component of the eukaryotic translation initiation factor 3 (eIF-3) complex, which is composed of 13 subunits: eif3a, eif3b, eif3c, eif3d, eif3e, eif3f, eif3g, eif3h, eif3i, eif3j, eif3k, eif3l and eif3m.</text>
</comment>
<comment type="subcellular location">
    <subcellularLocation>
        <location evidence="1">Cytoplasm</location>
    </subcellularLocation>
</comment>
<comment type="similarity">
    <text evidence="1">Belongs to the eIF-3 subunit J family.</text>
</comment>
<comment type="sequence caution" evidence="3">
    <conflict type="frameshift">
        <sequence resource="EMBL" id="CF222250"/>
    </conflict>
</comment>
<keyword id="KW-0175">Coiled coil</keyword>
<keyword id="KW-0963">Cytoplasm</keyword>
<keyword id="KW-0396">Initiation factor</keyword>
<keyword id="KW-0648">Protein biosynthesis</keyword>
<keyword id="KW-1185">Reference proteome</keyword>
<gene>
    <name type="primary">eif3j</name>
    <name type="synonym">eif3s1</name>
</gene>
<reference key="1">
    <citation type="submission" date="2004-12" db="EMBL/GenBank/DDBJ databases">
        <authorList>
            <consortium name="NIH - Xenopus Gene Collection (XGC) project"/>
        </authorList>
    </citation>
    <scope>NUCLEOTIDE SEQUENCE [LARGE SCALE MRNA]</scope>
    <source>
        <tissue>Embryo</tissue>
    </source>
</reference>
<proteinExistence type="evidence at transcript level"/>
<accession>Q5I0B5</accession>
<protein>
    <recommendedName>
        <fullName evidence="1">Eukaryotic translation initiation factor 3 subunit J</fullName>
        <shortName evidence="1">eIF3j</shortName>
    </recommendedName>
    <alternativeName>
        <fullName evidence="1">Eukaryotic translation initiation factor 3 subunit 1</fullName>
    </alternativeName>
    <alternativeName>
        <fullName evidence="1">eIF-3-alpha</fullName>
    </alternativeName>
    <alternativeName>
        <fullName evidence="1">eIF3 p35</fullName>
    </alternativeName>
</protein>
<evidence type="ECO:0000255" key="1">
    <source>
        <dbReference type="HAMAP-Rule" id="MF_03009"/>
    </source>
</evidence>
<evidence type="ECO:0000256" key="2">
    <source>
        <dbReference type="SAM" id="MobiDB-lite"/>
    </source>
</evidence>
<evidence type="ECO:0000305" key="3"/>
<feature type="chain" id="PRO_0000365127" description="Eukaryotic translation initiation factor 3 subunit J">
    <location>
        <begin position="1"/>
        <end position="256"/>
    </location>
</feature>
<feature type="region of interest" description="Disordered" evidence="2">
    <location>
        <begin position="1"/>
        <end position="109"/>
    </location>
</feature>
<feature type="region of interest" description="Disordered" evidence="2">
    <location>
        <begin position="214"/>
        <end position="237"/>
    </location>
</feature>
<feature type="coiled-coil region" evidence="1">
    <location>
        <begin position="70"/>
        <end position="99"/>
    </location>
</feature>
<feature type="compositionally biased region" description="Acidic residues" evidence="2">
    <location>
        <begin position="1"/>
        <end position="14"/>
    </location>
</feature>
<feature type="compositionally biased region" description="Acidic residues" evidence="2">
    <location>
        <begin position="35"/>
        <end position="54"/>
    </location>
</feature>
<feature type="compositionally biased region" description="Basic and acidic residues" evidence="2">
    <location>
        <begin position="55"/>
        <end position="101"/>
    </location>
</feature>
<feature type="sequence conflict" description="In Ref. 1; CF222250." evidence="3" ref="1">
    <location>
        <position position="65"/>
    </location>
</feature>
<feature type="sequence conflict" description="In Ref. 1; CF222250." evidence="3" ref="1">
    <original>K</original>
    <variation>Q</variation>
    <location>
        <position position="218"/>
    </location>
</feature>
<feature type="sequence conflict" description="In Ref. 1; CF222250." evidence="3" ref="1">
    <original>AN</original>
    <variation>PT</variation>
    <location>
        <begin position="232"/>
        <end position="233"/>
    </location>
</feature>
<dbReference type="EMBL" id="BC088509">
    <property type="protein sequence ID" value="AAH88509.1"/>
    <property type="molecule type" value="mRNA"/>
</dbReference>
<dbReference type="EMBL" id="CF222250">
    <property type="status" value="NOT_ANNOTATED_CDS"/>
    <property type="molecule type" value="mRNA"/>
</dbReference>
<dbReference type="RefSeq" id="NP_001263434.1">
    <property type="nucleotide sequence ID" value="NM_001276505.3"/>
</dbReference>
<dbReference type="SMR" id="Q5I0B5"/>
<dbReference type="FunCoup" id="Q5I0B5">
    <property type="interactions" value="1767"/>
</dbReference>
<dbReference type="STRING" id="8364.ENSXETP00000012740"/>
<dbReference type="PaxDb" id="8364-ENSXETP00000017141"/>
<dbReference type="GeneID" id="496929"/>
<dbReference type="KEGG" id="xtr:496929"/>
<dbReference type="AGR" id="Xenbase:XB-GENE-999878"/>
<dbReference type="CTD" id="8669"/>
<dbReference type="Xenbase" id="XB-GENE-999878">
    <property type="gene designation" value="eif3j"/>
</dbReference>
<dbReference type="eggNOG" id="KOG4813">
    <property type="taxonomic scope" value="Eukaryota"/>
</dbReference>
<dbReference type="HOGENOM" id="CLU_085806_2_1_1"/>
<dbReference type="InParanoid" id="Q5I0B5"/>
<dbReference type="OMA" id="KPHYALW"/>
<dbReference type="OrthoDB" id="20381at2759"/>
<dbReference type="PhylomeDB" id="Q5I0B5"/>
<dbReference type="Reactome" id="R-XTR-156827">
    <property type="pathway name" value="L13a-mediated translational silencing of Ceruloplasmin expression"/>
</dbReference>
<dbReference type="Reactome" id="R-XTR-72689">
    <property type="pathway name" value="Formation of a pool of free 40S subunits"/>
</dbReference>
<dbReference type="Reactome" id="R-XTR-72695">
    <property type="pathway name" value="Formation of the ternary complex, and subsequently, the 43S complex"/>
</dbReference>
<dbReference type="Reactome" id="R-XTR-72702">
    <property type="pathway name" value="Ribosomal scanning and start codon recognition"/>
</dbReference>
<dbReference type="Proteomes" id="UP000008143">
    <property type="component" value="Chromosome 3"/>
</dbReference>
<dbReference type="ExpressionAtlas" id="Q5I0B5">
    <property type="expression patterns" value="baseline and differential"/>
</dbReference>
<dbReference type="GO" id="GO:0016282">
    <property type="term" value="C:eukaryotic 43S preinitiation complex"/>
    <property type="evidence" value="ECO:0007669"/>
    <property type="project" value="UniProtKB-UniRule"/>
</dbReference>
<dbReference type="GO" id="GO:0033290">
    <property type="term" value="C:eukaryotic 48S preinitiation complex"/>
    <property type="evidence" value="ECO:0007669"/>
    <property type="project" value="UniProtKB-UniRule"/>
</dbReference>
<dbReference type="GO" id="GO:0005852">
    <property type="term" value="C:eukaryotic translation initiation factor 3 complex"/>
    <property type="evidence" value="ECO:0000250"/>
    <property type="project" value="UniProtKB"/>
</dbReference>
<dbReference type="GO" id="GO:0003743">
    <property type="term" value="F:translation initiation factor activity"/>
    <property type="evidence" value="ECO:0007669"/>
    <property type="project" value="UniProtKB-UniRule"/>
</dbReference>
<dbReference type="GO" id="GO:0001732">
    <property type="term" value="P:formation of cytoplasmic translation initiation complex"/>
    <property type="evidence" value="ECO:0007669"/>
    <property type="project" value="UniProtKB-UniRule"/>
</dbReference>
<dbReference type="FunFam" id="1.10.246.60:FF:000001">
    <property type="entry name" value="Eukaryotic translation initiation factor 3 subunit J"/>
    <property type="match status" value="1"/>
</dbReference>
<dbReference type="Gene3D" id="1.10.246.60">
    <property type="entry name" value="Eukaryotic translation initiation factor 3 like domains"/>
    <property type="match status" value="1"/>
</dbReference>
<dbReference type="HAMAP" id="MF_03009">
    <property type="entry name" value="eIF3j"/>
    <property type="match status" value="1"/>
</dbReference>
<dbReference type="InterPro" id="IPR023194">
    <property type="entry name" value="eIF3-like_dom_sf"/>
</dbReference>
<dbReference type="InterPro" id="IPR013906">
    <property type="entry name" value="eIF3j"/>
</dbReference>
<dbReference type="PANTHER" id="PTHR21681">
    <property type="entry name" value="EUKARYOTIC TRANSLATION INITIATION FACTOR 3 SUBUNIT J"/>
    <property type="match status" value="1"/>
</dbReference>
<dbReference type="PANTHER" id="PTHR21681:SF0">
    <property type="entry name" value="EUKARYOTIC TRANSLATION INITIATION FACTOR 3 SUBUNIT J"/>
    <property type="match status" value="1"/>
</dbReference>
<dbReference type="Pfam" id="PF08597">
    <property type="entry name" value="eIF3_subunit"/>
    <property type="match status" value="1"/>
</dbReference>